<organism>
    <name type="scientific">Arabidopsis thaliana</name>
    <name type="common">Mouse-ear cress</name>
    <dbReference type="NCBI Taxonomy" id="3702"/>
    <lineage>
        <taxon>Eukaryota</taxon>
        <taxon>Viridiplantae</taxon>
        <taxon>Streptophyta</taxon>
        <taxon>Embryophyta</taxon>
        <taxon>Tracheophyta</taxon>
        <taxon>Spermatophyta</taxon>
        <taxon>Magnoliopsida</taxon>
        <taxon>eudicotyledons</taxon>
        <taxon>Gunneridae</taxon>
        <taxon>Pentapetalae</taxon>
        <taxon>rosids</taxon>
        <taxon>malvids</taxon>
        <taxon>Brassicales</taxon>
        <taxon>Brassicaceae</taxon>
        <taxon>Camelineae</taxon>
        <taxon>Arabidopsis</taxon>
    </lineage>
</organism>
<accession>Q96519</accession>
<accession>P93723</accession>
<comment type="function">
    <text>Removal of H(2)O(2), oxidation of toxic reductants, biosynthesis and degradation of lignin, suberization, auxin catabolism, response to environmental stresses such as wounding, pathogen attack and oxidative stress. These functions might be dependent on each isozyme/isoform in each plant tissue.</text>
</comment>
<comment type="catalytic activity">
    <reaction>
        <text>2 a phenolic donor + H2O2 = 2 a phenolic radical donor + 2 H2O</text>
        <dbReference type="Rhea" id="RHEA:56136"/>
        <dbReference type="ChEBI" id="CHEBI:15377"/>
        <dbReference type="ChEBI" id="CHEBI:16240"/>
        <dbReference type="ChEBI" id="CHEBI:139520"/>
        <dbReference type="ChEBI" id="CHEBI:139521"/>
        <dbReference type="EC" id="1.11.1.7"/>
    </reaction>
</comment>
<comment type="cofactor">
    <cofactor evidence="2">
        <name>heme b</name>
        <dbReference type="ChEBI" id="CHEBI:60344"/>
    </cofactor>
    <text evidence="2">Binds 1 heme b (iron(II)-protoporphyrin IX) group per subunit.</text>
</comment>
<comment type="cofactor">
    <cofactor evidence="2">
        <name>Ca(2+)</name>
        <dbReference type="ChEBI" id="CHEBI:29108"/>
    </cofactor>
    <text evidence="2">Binds 2 calcium ions per subunit.</text>
</comment>
<comment type="subcellular location">
    <subcellularLocation>
        <location evidence="2">Secreted</location>
    </subcellularLocation>
</comment>
<comment type="tissue specificity">
    <text>Expressed in roots and stems.</text>
</comment>
<comment type="induction">
    <text evidence="4">Expressed under a diurnal rhythm.</text>
</comment>
<comment type="miscellaneous">
    <text>There are 73 peroxidase genes in A.thaliana.</text>
</comment>
<comment type="similarity">
    <text evidence="2">Belongs to the peroxidase family. Classical plant (class III) peroxidase subfamily.</text>
</comment>
<feature type="signal peptide" evidence="1">
    <location>
        <begin position="1"/>
        <end position="20"/>
    </location>
</feature>
<feature type="chain" id="PRO_0000023677" description="Peroxidase 11">
    <location>
        <begin position="21"/>
        <end position="336"/>
    </location>
</feature>
<feature type="active site" description="Proton acceptor" evidence="2 3">
    <location>
        <position position="70"/>
    </location>
</feature>
<feature type="binding site" evidence="2">
    <location>
        <position position="71"/>
    </location>
    <ligand>
        <name>Ca(2+)</name>
        <dbReference type="ChEBI" id="CHEBI:29108"/>
        <label>1</label>
    </ligand>
</feature>
<feature type="binding site" evidence="2">
    <location>
        <position position="74"/>
    </location>
    <ligand>
        <name>Ca(2+)</name>
        <dbReference type="ChEBI" id="CHEBI:29108"/>
        <label>1</label>
    </ligand>
</feature>
<feature type="binding site" evidence="2">
    <location>
        <position position="76"/>
    </location>
    <ligand>
        <name>Ca(2+)</name>
        <dbReference type="ChEBI" id="CHEBI:29108"/>
        <label>1</label>
    </ligand>
</feature>
<feature type="binding site" evidence="2">
    <location>
        <position position="78"/>
    </location>
    <ligand>
        <name>Ca(2+)</name>
        <dbReference type="ChEBI" id="CHEBI:29108"/>
        <label>1</label>
    </ligand>
</feature>
<feature type="binding site" evidence="2">
    <location>
        <position position="80"/>
    </location>
    <ligand>
        <name>Ca(2+)</name>
        <dbReference type="ChEBI" id="CHEBI:29108"/>
        <label>1</label>
    </ligand>
</feature>
<feature type="binding site" evidence="2">
    <location>
        <position position="167"/>
    </location>
    <ligand>
        <name>substrate</name>
    </ligand>
</feature>
<feature type="binding site" description="axial binding residue" evidence="2">
    <location>
        <position position="197"/>
    </location>
    <ligand>
        <name>heme b</name>
        <dbReference type="ChEBI" id="CHEBI:60344"/>
    </ligand>
    <ligandPart>
        <name>Fe</name>
        <dbReference type="ChEBI" id="CHEBI:18248"/>
    </ligandPart>
</feature>
<feature type="binding site" evidence="2">
    <location>
        <position position="198"/>
    </location>
    <ligand>
        <name>Ca(2+)</name>
        <dbReference type="ChEBI" id="CHEBI:29108"/>
        <label>2</label>
    </ligand>
</feature>
<feature type="binding site" evidence="2">
    <location>
        <position position="251"/>
    </location>
    <ligand>
        <name>Ca(2+)</name>
        <dbReference type="ChEBI" id="CHEBI:29108"/>
        <label>2</label>
    </ligand>
</feature>
<feature type="binding site" evidence="2">
    <location>
        <position position="254"/>
    </location>
    <ligand>
        <name>Ca(2+)</name>
        <dbReference type="ChEBI" id="CHEBI:29108"/>
        <label>2</label>
    </ligand>
</feature>
<feature type="binding site" evidence="2">
    <location>
        <position position="259"/>
    </location>
    <ligand>
        <name>Ca(2+)</name>
        <dbReference type="ChEBI" id="CHEBI:29108"/>
        <label>2</label>
    </ligand>
</feature>
<feature type="site" description="Transition state stabilizer" evidence="2">
    <location>
        <position position="66"/>
    </location>
</feature>
<feature type="glycosylation site" description="N-linked (GlcNAc...) asparagine" evidence="1">
    <location>
        <position position="246"/>
    </location>
</feature>
<feature type="disulfide bond" evidence="2">
    <location>
        <begin position="39"/>
        <end position="119"/>
    </location>
</feature>
<feature type="disulfide bond" evidence="2">
    <location>
        <begin position="72"/>
        <end position="77"/>
    </location>
</feature>
<feature type="disulfide bond" evidence="2">
    <location>
        <begin position="125"/>
        <end position="331"/>
    </location>
</feature>
<feature type="disulfide bond" evidence="2">
    <location>
        <begin position="204"/>
        <end position="236"/>
    </location>
</feature>
<feature type="sequence conflict" description="In Ref. 1; CAA72485." evidence="5" ref="1">
    <original>ALI</original>
    <variation>YLL</variation>
    <location>
        <begin position="192"/>
        <end position="194"/>
    </location>
</feature>
<feature type="sequence conflict" description="In Ref. 1; CAA72485." evidence="5" ref="1">
    <original>T</original>
    <variation>M</variation>
    <location>
        <position position="218"/>
    </location>
</feature>
<protein>
    <recommendedName>
        <fullName>Peroxidase 11</fullName>
        <shortName>Atperox P11</shortName>
        <ecNumber>1.11.1.7</ecNumber>
    </recommendedName>
    <alternativeName>
        <fullName>ATP23a/ATP23b</fullName>
    </alternativeName>
</protein>
<gene>
    <name type="primary">PER11</name>
    <name type="synonym">P11</name>
    <name type="ordered locus">At1g68850</name>
    <name type="ORF">F14K14.4</name>
    <name type="ORF">T6L1.4</name>
</gene>
<name>PER11_ARATH</name>
<evidence type="ECO:0000255" key="1"/>
<evidence type="ECO:0000255" key="2">
    <source>
        <dbReference type="PROSITE-ProRule" id="PRU00297"/>
    </source>
</evidence>
<evidence type="ECO:0000255" key="3">
    <source>
        <dbReference type="PROSITE-ProRule" id="PRU10012"/>
    </source>
</evidence>
<evidence type="ECO:0000269" key="4">
    <source>
    </source>
</evidence>
<evidence type="ECO:0000305" key="5"/>
<keyword id="KW-0090">Biological rhythms</keyword>
<keyword id="KW-0106">Calcium</keyword>
<keyword id="KW-1015">Disulfide bond</keyword>
<keyword id="KW-0325">Glycoprotein</keyword>
<keyword id="KW-0349">Heme</keyword>
<keyword id="KW-0376">Hydrogen peroxide</keyword>
<keyword id="KW-0408">Iron</keyword>
<keyword id="KW-0479">Metal-binding</keyword>
<keyword id="KW-0560">Oxidoreductase</keyword>
<keyword id="KW-0575">Peroxidase</keyword>
<keyword id="KW-1185">Reference proteome</keyword>
<keyword id="KW-0964">Secreted</keyword>
<keyword id="KW-0732">Signal</keyword>
<sequence length="336" mass="37313">MMRLLFVFFMVHTIFIPCFSFDTPGKDLPLTLDYYKSTCPTVFDVIKKEMECIVKEDPRNAAIIIRLHFHDCFVQGCDGSVLLDETETLQGEKKASPNINSLKGYKIVDRIKNIIESECPGVVSCADLLTIGARDATILVGGPYWDVPVGRKDSKTASYELATTNLPTPEEGLISIIAKFYSQGLSVEDMVALIGAHTIGKAQCRNFRSRIYGDFQVTSALNPVSETYLASLREICPASSGEGDSNVTAIDNVTPNLFDNSIYHTLLRGEGLLNSDQEMYTSLFGIQTRRIVSKYAEDPVAFFEQFSKSMVKMGNILNSESLADGEVRRNCRFVNT</sequence>
<proteinExistence type="evidence at protein level"/>
<reference key="1">
    <citation type="submission" date="1997-03" db="EMBL/GenBank/DDBJ databases">
        <title>From expressed sequence tags to structure, function, evolution and expression of 28 ER-targeted Arabidopsis peroxidases.</title>
        <authorList>
            <person name="Welinder K.G."/>
            <person name="Jespersen H.M."/>
            <person name="Kjaersgaard I.V.H."/>
            <person name="Justesen A.F."/>
            <person name="Oestergaard L."/>
            <person name="Abelskov A.K."/>
            <person name="Jensen R.B."/>
            <person name="Hansen L.N."/>
            <person name="Rasmussen S.K."/>
        </authorList>
    </citation>
    <scope>NUCLEOTIDE SEQUENCE [MRNA]</scope>
    <source>
        <strain>cv. Columbia</strain>
    </source>
</reference>
<reference key="2">
    <citation type="journal article" date="2000" name="Nature">
        <title>Sequence and analysis of chromosome 1 of the plant Arabidopsis thaliana.</title>
        <authorList>
            <person name="Theologis A."/>
            <person name="Ecker J.R."/>
            <person name="Palm C.J."/>
            <person name="Federspiel N.A."/>
            <person name="Kaul S."/>
            <person name="White O."/>
            <person name="Alonso J."/>
            <person name="Altafi H."/>
            <person name="Araujo R."/>
            <person name="Bowman C.L."/>
            <person name="Brooks S.Y."/>
            <person name="Buehler E."/>
            <person name="Chan A."/>
            <person name="Chao Q."/>
            <person name="Chen H."/>
            <person name="Cheuk R.F."/>
            <person name="Chin C.W."/>
            <person name="Chung M.K."/>
            <person name="Conn L."/>
            <person name="Conway A.B."/>
            <person name="Conway A.R."/>
            <person name="Creasy T.H."/>
            <person name="Dewar K."/>
            <person name="Dunn P."/>
            <person name="Etgu P."/>
            <person name="Feldblyum T.V."/>
            <person name="Feng J.-D."/>
            <person name="Fong B."/>
            <person name="Fujii C.Y."/>
            <person name="Gill J.E."/>
            <person name="Goldsmith A.D."/>
            <person name="Haas B."/>
            <person name="Hansen N.F."/>
            <person name="Hughes B."/>
            <person name="Huizar L."/>
            <person name="Hunter J.L."/>
            <person name="Jenkins J."/>
            <person name="Johnson-Hopson C."/>
            <person name="Khan S."/>
            <person name="Khaykin E."/>
            <person name="Kim C.J."/>
            <person name="Koo H.L."/>
            <person name="Kremenetskaia I."/>
            <person name="Kurtz D.B."/>
            <person name="Kwan A."/>
            <person name="Lam B."/>
            <person name="Langin-Hooper S."/>
            <person name="Lee A."/>
            <person name="Lee J.M."/>
            <person name="Lenz C.A."/>
            <person name="Li J.H."/>
            <person name="Li Y.-P."/>
            <person name="Lin X."/>
            <person name="Liu S.X."/>
            <person name="Liu Z.A."/>
            <person name="Luros J.S."/>
            <person name="Maiti R."/>
            <person name="Marziali A."/>
            <person name="Militscher J."/>
            <person name="Miranda M."/>
            <person name="Nguyen M."/>
            <person name="Nierman W.C."/>
            <person name="Osborne B.I."/>
            <person name="Pai G."/>
            <person name="Peterson J."/>
            <person name="Pham P.K."/>
            <person name="Rizzo M."/>
            <person name="Rooney T."/>
            <person name="Rowley D."/>
            <person name="Sakano H."/>
            <person name="Salzberg S.L."/>
            <person name="Schwartz J.R."/>
            <person name="Shinn P."/>
            <person name="Southwick A.M."/>
            <person name="Sun H."/>
            <person name="Tallon L.J."/>
            <person name="Tambunga G."/>
            <person name="Toriumi M.J."/>
            <person name="Town C.D."/>
            <person name="Utterback T."/>
            <person name="Van Aken S."/>
            <person name="Vaysberg M."/>
            <person name="Vysotskaia V.S."/>
            <person name="Walker M."/>
            <person name="Wu D."/>
            <person name="Yu G."/>
            <person name="Fraser C.M."/>
            <person name="Venter J.C."/>
            <person name="Davis R.W."/>
        </authorList>
    </citation>
    <scope>NUCLEOTIDE SEQUENCE [LARGE SCALE GENOMIC DNA]</scope>
    <source>
        <strain>cv. Columbia</strain>
    </source>
</reference>
<reference key="3">
    <citation type="journal article" date="2017" name="Plant J.">
        <title>Araport11: a complete reannotation of the Arabidopsis thaliana reference genome.</title>
        <authorList>
            <person name="Cheng C.Y."/>
            <person name="Krishnakumar V."/>
            <person name="Chan A.P."/>
            <person name="Thibaud-Nissen F."/>
            <person name="Schobel S."/>
            <person name="Town C.D."/>
        </authorList>
    </citation>
    <scope>GENOME REANNOTATION</scope>
    <source>
        <strain>cv. Columbia</strain>
    </source>
</reference>
<reference key="4">
    <citation type="journal article" date="1998" name="FEBS Lett.">
        <title>Computational analyses and annotations of the Arabidopsis peroxidase gene family.</title>
        <authorList>
            <person name="Oestergaard L."/>
            <person name="Pedersen A.G."/>
            <person name="Jespersen H.M."/>
            <person name="Brunak S."/>
            <person name="Welinder K.G."/>
        </authorList>
    </citation>
    <scope>CHARACTERIZATION</scope>
    <source>
        <strain>cv. Columbia</strain>
    </source>
</reference>
<reference key="5">
    <citation type="journal article" date="2001" name="Plant Cell">
        <title>Microarray analysis of diurnal and circadian-regulated genes in Arabidopsis.</title>
        <authorList>
            <person name="Schaffer R."/>
            <person name="Landgraf J."/>
            <person name="Accerbi M."/>
            <person name="Simon V."/>
            <person name="Larson M."/>
            <person name="Wisman E."/>
        </authorList>
    </citation>
    <scope>INDUCTION</scope>
    <source>
        <strain>cv. Columbia</strain>
    </source>
</reference>
<reference key="6">
    <citation type="journal article" date="2002" name="Gene">
        <title>Analysis and expression of the class III peroxidase large gene family in Arabidopsis thaliana.</title>
        <authorList>
            <person name="Tognolli M."/>
            <person name="Penel C."/>
            <person name="Greppin H."/>
            <person name="Simon P."/>
        </authorList>
    </citation>
    <scope>GENE FAMILY ORGANIZATION</scope>
    <scope>NOMENCLATURE</scope>
    <source>
        <strain>cv. Columbia</strain>
    </source>
</reference>
<dbReference type="EC" id="1.11.1.7"/>
<dbReference type="EMBL" id="Y08782">
    <property type="protein sequence ID" value="CAA70035.1"/>
    <property type="molecule type" value="mRNA"/>
</dbReference>
<dbReference type="EMBL" id="Y11789">
    <property type="protein sequence ID" value="CAA72485.1"/>
    <property type="molecule type" value="mRNA"/>
</dbReference>
<dbReference type="EMBL" id="AC011665">
    <property type="protein sequence ID" value="AAG51588.1"/>
    <property type="molecule type" value="Genomic_DNA"/>
</dbReference>
<dbReference type="EMBL" id="AC011914">
    <property type="protein sequence ID" value="AAG52033.1"/>
    <property type="molecule type" value="Genomic_DNA"/>
</dbReference>
<dbReference type="EMBL" id="CP002684">
    <property type="protein sequence ID" value="AEE34850.1"/>
    <property type="molecule type" value="Genomic_DNA"/>
</dbReference>
<dbReference type="PIR" id="C96713">
    <property type="entry name" value="C96713"/>
</dbReference>
<dbReference type="RefSeq" id="NP_564948.1">
    <property type="nucleotide sequence ID" value="NM_105559.4"/>
</dbReference>
<dbReference type="SMR" id="Q96519"/>
<dbReference type="BioGRID" id="28439">
    <property type="interactions" value="2"/>
</dbReference>
<dbReference type="FunCoup" id="Q96519">
    <property type="interactions" value="129"/>
</dbReference>
<dbReference type="STRING" id="3702.Q96519"/>
<dbReference type="PeroxiBase" id="92">
    <property type="entry name" value="AtPrx11"/>
</dbReference>
<dbReference type="GlyCosmos" id="Q96519">
    <property type="glycosylation" value="1 site, No reported glycans"/>
</dbReference>
<dbReference type="GlyGen" id="Q96519">
    <property type="glycosylation" value="1 site"/>
</dbReference>
<dbReference type="PaxDb" id="3702-AT1G68850.1"/>
<dbReference type="ProteomicsDB" id="236296"/>
<dbReference type="EnsemblPlants" id="AT1G68850.1">
    <property type="protein sequence ID" value="AT1G68850.1"/>
    <property type="gene ID" value="AT1G68850"/>
</dbReference>
<dbReference type="GeneID" id="843218"/>
<dbReference type="Gramene" id="AT1G68850.1">
    <property type="protein sequence ID" value="AT1G68850.1"/>
    <property type="gene ID" value="AT1G68850"/>
</dbReference>
<dbReference type="KEGG" id="ath:AT1G68850"/>
<dbReference type="Araport" id="AT1G68850"/>
<dbReference type="TAIR" id="AT1G68850"/>
<dbReference type="eggNOG" id="ENOG502QT8W">
    <property type="taxonomic scope" value="Eukaryota"/>
</dbReference>
<dbReference type="HOGENOM" id="CLU_010543_0_1_1"/>
<dbReference type="InParanoid" id="Q96519"/>
<dbReference type="OMA" id="MDYVTPE"/>
<dbReference type="OrthoDB" id="2113341at2759"/>
<dbReference type="PhylomeDB" id="Q96519"/>
<dbReference type="BioCyc" id="ARA:AT1G68850-MONOMER"/>
<dbReference type="PRO" id="PR:Q96519"/>
<dbReference type="Proteomes" id="UP000006548">
    <property type="component" value="Chromosome 1"/>
</dbReference>
<dbReference type="ExpressionAtlas" id="Q96519">
    <property type="expression patterns" value="baseline and differential"/>
</dbReference>
<dbReference type="GO" id="GO:0005576">
    <property type="term" value="C:extracellular region"/>
    <property type="evidence" value="ECO:0007669"/>
    <property type="project" value="UniProtKB-SubCell"/>
</dbReference>
<dbReference type="GO" id="GO:0020037">
    <property type="term" value="F:heme binding"/>
    <property type="evidence" value="ECO:0007669"/>
    <property type="project" value="InterPro"/>
</dbReference>
<dbReference type="GO" id="GO:0140825">
    <property type="term" value="F:lactoperoxidase activity"/>
    <property type="evidence" value="ECO:0007669"/>
    <property type="project" value="UniProtKB-EC"/>
</dbReference>
<dbReference type="GO" id="GO:0046872">
    <property type="term" value="F:metal ion binding"/>
    <property type="evidence" value="ECO:0007669"/>
    <property type="project" value="UniProtKB-KW"/>
</dbReference>
<dbReference type="GO" id="GO:0042744">
    <property type="term" value="P:hydrogen peroxide catabolic process"/>
    <property type="evidence" value="ECO:0007669"/>
    <property type="project" value="UniProtKB-KW"/>
</dbReference>
<dbReference type="GO" id="GO:0006979">
    <property type="term" value="P:response to oxidative stress"/>
    <property type="evidence" value="ECO:0007669"/>
    <property type="project" value="InterPro"/>
</dbReference>
<dbReference type="GO" id="GO:0048511">
    <property type="term" value="P:rhythmic process"/>
    <property type="evidence" value="ECO:0007669"/>
    <property type="project" value="UniProtKB-KW"/>
</dbReference>
<dbReference type="CDD" id="cd00693">
    <property type="entry name" value="secretory_peroxidase"/>
    <property type="match status" value="1"/>
</dbReference>
<dbReference type="FunFam" id="1.10.420.10:FF:000001">
    <property type="entry name" value="Peroxidase"/>
    <property type="match status" value="1"/>
</dbReference>
<dbReference type="FunFam" id="1.10.520.10:FF:000009">
    <property type="entry name" value="Peroxidase"/>
    <property type="match status" value="1"/>
</dbReference>
<dbReference type="Gene3D" id="1.10.520.10">
    <property type="match status" value="1"/>
</dbReference>
<dbReference type="Gene3D" id="1.10.420.10">
    <property type="entry name" value="Peroxidase, domain 2"/>
    <property type="match status" value="1"/>
</dbReference>
<dbReference type="InterPro" id="IPR002016">
    <property type="entry name" value="Haem_peroxidase"/>
</dbReference>
<dbReference type="InterPro" id="IPR010255">
    <property type="entry name" value="Haem_peroxidase_sf"/>
</dbReference>
<dbReference type="InterPro" id="IPR000823">
    <property type="entry name" value="Peroxidase_pln"/>
</dbReference>
<dbReference type="InterPro" id="IPR019794">
    <property type="entry name" value="Peroxidases_AS"/>
</dbReference>
<dbReference type="InterPro" id="IPR019793">
    <property type="entry name" value="Peroxidases_heam-ligand_BS"/>
</dbReference>
<dbReference type="InterPro" id="IPR033905">
    <property type="entry name" value="Secretory_peroxidase"/>
</dbReference>
<dbReference type="PANTHER" id="PTHR31388:SF9">
    <property type="entry name" value="PEROXIDASE 11"/>
    <property type="match status" value="1"/>
</dbReference>
<dbReference type="PANTHER" id="PTHR31388">
    <property type="entry name" value="PEROXIDASE 72-RELATED"/>
    <property type="match status" value="1"/>
</dbReference>
<dbReference type="Pfam" id="PF00141">
    <property type="entry name" value="peroxidase"/>
    <property type="match status" value="1"/>
</dbReference>
<dbReference type="PRINTS" id="PR00458">
    <property type="entry name" value="PEROXIDASE"/>
</dbReference>
<dbReference type="PRINTS" id="PR00461">
    <property type="entry name" value="PLPEROXIDASE"/>
</dbReference>
<dbReference type="SUPFAM" id="SSF48113">
    <property type="entry name" value="Heme-dependent peroxidases"/>
    <property type="match status" value="1"/>
</dbReference>
<dbReference type="PROSITE" id="PS00435">
    <property type="entry name" value="PEROXIDASE_1"/>
    <property type="match status" value="1"/>
</dbReference>
<dbReference type="PROSITE" id="PS00436">
    <property type="entry name" value="PEROXIDASE_2"/>
    <property type="match status" value="1"/>
</dbReference>
<dbReference type="PROSITE" id="PS50873">
    <property type="entry name" value="PEROXIDASE_4"/>
    <property type="match status" value="1"/>
</dbReference>